<gene>
    <name evidence="1" type="primary">recA</name>
    <name type="ordered locus">SpyM51758</name>
</gene>
<comment type="function">
    <text evidence="1">Can catalyze the hydrolysis of ATP in the presence of single-stranded DNA, the ATP-dependent uptake of single-stranded DNA by duplex DNA, and the ATP-dependent hybridization of homologous single-stranded DNAs. It interacts with LexA causing its activation and leading to its autocatalytic cleavage.</text>
</comment>
<comment type="subcellular location">
    <subcellularLocation>
        <location evidence="1">Cytoplasm</location>
    </subcellularLocation>
</comment>
<comment type="similarity">
    <text evidence="1">Belongs to the RecA family.</text>
</comment>
<feature type="chain" id="PRO_1000048015" description="Protein RecA">
    <location>
        <begin position="1"/>
        <end position="378"/>
    </location>
</feature>
<feature type="binding site" evidence="1">
    <location>
        <begin position="79"/>
        <end position="86"/>
    </location>
    <ligand>
        <name>ATP</name>
        <dbReference type="ChEBI" id="CHEBI:30616"/>
    </ligand>
</feature>
<name>RECA_STRPG</name>
<reference key="1">
    <citation type="journal article" date="2007" name="J. Bacteriol.">
        <title>Complete genome of acute rheumatic fever-associated serotype M5 Streptococcus pyogenes strain Manfredo.</title>
        <authorList>
            <person name="Holden M.T.G."/>
            <person name="Scott A."/>
            <person name="Cherevach I."/>
            <person name="Chillingworth T."/>
            <person name="Churcher C."/>
            <person name="Cronin A."/>
            <person name="Dowd L."/>
            <person name="Feltwell T."/>
            <person name="Hamlin N."/>
            <person name="Holroyd S."/>
            <person name="Jagels K."/>
            <person name="Moule S."/>
            <person name="Mungall K."/>
            <person name="Quail M.A."/>
            <person name="Price C."/>
            <person name="Rabbinowitsch E."/>
            <person name="Sharp S."/>
            <person name="Skelton J."/>
            <person name="Whitehead S."/>
            <person name="Barrell B.G."/>
            <person name="Kehoe M."/>
            <person name="Parkhill J."/>
        </authorList>
    </citation>
    <scope>NUCLEOTIDE SEQUENCE [LARGE SCALE GENOMIC DNA]</scope>
    <source>
        <strain>Manfredo</strain>
    </source>
</reference>
<proteinExistence type="inferred from homology"/>
<dbReference type="EMBL" id="AM295007">
    <property type="protein sequence ID" value="CAM31080.1"/>
    <property type="molecule type" value="Genomic_DNA"/>
</dbReference>
<dbReference type="RefSeq" id="WP_002982186.1">
    <property type="nucleotide sequence ID" value="NC_009332.1"/>
</dbReference>
<dbReference type="SMR" id="A2RGU8"/>
<dbReference type="KEGG" id="spf:SpyM51758"/>
<dbReference type="HOGENOM" id="CLU_040469_3_2_9"/>
<dbReference type="GO" id="GO:0005829">
    <property type="term" value="C:cytosol"/>
    <property type="evidence" value="ECO:0007669"/>
    <property type="project" value="TreeGrafter"/>
</dbReference>
<dbReference type="GO" id="GO:0005524">
    <property type="term" value="F:ATP binding"/>
    <property type="evidence" value="ECO:0007669"/>
    <property type="project" value="UniProtKB-UniRule"/>
</dbReference>
<dbReference type="GO" id="GO:0016887">
    <property type="term" value="F:ATP hydrolysis activity"/>
    <property type="evidence" value="ECO:0007669"/>
    <property type="project" value="InterPro"/>
</dbReference>
<dbReference type="GO" id="GO:0140664">
    <property type="term" value="F:ATP-dependent DNA damage sensor activity"/>
    <property type="evidence" value="ECO:0007669"/>
    <property type="project" value="InterPro"/>
</dbReference>
<dbReference type="GO" id="GO:0003684">
    <property type="term" value="F:damaged DNA binding"/>
    <property type="evidence" value="ECO:0007669"/>
    <property type="project" value="UniProtKB-UniRule"/>
</dbReference>
<dbReference type="GO" id="GO:0003697">
    <property type="term" value="F:single-stranded DNA binding"/>
    <property type="evidence" value="ECO:0007669"/>
    <property type="project" value="UniProtKB-UniRule"/>
</dbReference>
<dbReference type="GO" id="GO:0006310">
    <property type="term" value="P:DNA recombination"/>
    <property type="evidence" value="ECO:0007669"/>
    <property type="project" value="UniProtKB-UniRule"/>
</dbReference>
<dbReference type="GO" id="GO:0006281">
    <property type="term" value="P:DNA repair"/>
    <property type="evidence" value="ECO:0007669"/>
    <property type="project" value="UniProtKB-UniRule"/>
</dbReference>
<dbReference type="GO" id="GO:0009432">
    <property type="term" value="P:SOS response"/>
    <property type="evidence" value="ECO:0007669"/>
    <property type="project" value="UniProtKB-UniRule"/>
</dbReference>
<dbReference type="CDD" id="cd00983">
    <property type="entry name" value="RecA"/>
    <property type="match status" value="1"/>
</dbReference>
<dbReference type="FunFam" id="3.40.50.300:FF:000087">
    <property type="entry name" value="Recombinase RecA"/>
    <property type="match status" value="1"/>
</dbReference>
<dbReference type="Gene3D" id="3.40.50.300">
    <property type="entry name" value="P-loop containing nucleotide triphosphate hydrolases"/>
    <property type="match status" value="1"/>
</dbReference>
<dbReference type="HAMAP" id="MF_00268">
    <property type="entry name" value="RecA"/>
    <property type="match status" value="1"/>
</dbReference>
<dbReference type="InterPro" id="IPR003593">
    <property type="entry name" value="AAA+_ATPase"/>
</dbReference>
<dbReference type="InterPro" id="IPR013765">
    <property type="entry name" value="DNA_recomb/repair_RecA"/>
</dbReference>
<dbReference type="InterPro" id="IPR020584">
    <property type="entry name" value="DNA_recomb/repair_RecA_CS"/>
</dbReference>
<dbReference type="InterPro" id="IPR027417">
    <property type="entry name" value="P-loop_NTPase"/>
</dbReference>
<dbReference type="InterPro" id="IPR049261">
    <property type="entry name" value="RecA-like_C"/>
</dbReference>
<dbReference type="InterPro" id="IPR049428">
    <property type="entry name" value="RecA-like_N"/>
</dbReference>
<dbReference type="InterPro" id="IPR020588">
    <property type="entry name" value="RecA_ATP-bd"/>
</dbReference>
<dbReference type="InterPro" id="IPR023400">
    <property type="entry name" value="RecA_C_sf"/>
</dbReference>
<dbReference type="InterPro" id="IPR020587">
    <property type="entry name" value="RecA_monomer-monomer_interface"/>
</dbReference>
<dbReference type="NCBIfam" id="TIGR02012">
    <property type="entry name" value="tigrfam_recA"/>
    <property type="match status" value="1"/>
</dbReference>
<dbReference type="PANTHER" id="PTHR45900:SF1">
    <property type="entry name" value="MITOCHONDRIAL DNA REPAIR PROTEIN RECA HOMOLOG-RELATED"/>
    <property type="match status" value="1"/>
</dbReference>
<dbReference type="PANTHER" id="PTHR45900">
    <property type="entry name" value="RECA"/>
    <property type="match status" value="1"/>
</dbReference>
<dbReference type="Pfam" id="PF00154">
    <property type="entry name" value="RecA"/>
    <property type="match status" value="1"/>
</dbReference>
<dbReference type="Pfam" id="PF21096">
    <property type="entry name" value="RecA_C"/>
    <property type="match status" value="1"/>
</dbReference>
<dbReference type="PRINTS" id="PR00142">
    <property type="entry name" value="RECA"/>
</dbReference>
<dbReference type="SMART" id="SM00382">
    <property type="entry name" value="AAA"/>
    <property type="match status" value="1"/>
</dbReference>
<dbReference type="SUPFAM" id="SSF52540">
    <property type="entry name" value="P-loop containing nucleoside triphosphate hydrolases"/>
    <property type="match status" value="1"/>
</dbReference>
<dbReference type="SUPFAM" id="SSF54752">
    <property type="entry name" value="RecA protein, C-terminal domain"/>
    <property type="match status" value="1"/>
</dbReference>
<dbReference type="PROSITE" id="PS00321">
    <property type="entry name" value="RECA_1"/>
    <property type="match status" value="1"/>
</dbReference>
<dbReference type="PROSITE" id="PS50162">
    <property type="entry name" value="RECA_2"/>
    <property type="match status" value="1"/>
</dbReference>
<dbReference type="PROSITE" id="PS50163">
    <property type="entry name" value="RECA_3"/>
    <property type="match status" value="1"/>
</dbReference>
<protein>
    <recommendedName>
        <fullName evidence="1">Protein RecA</fullName>
    </recommendedName>
    <alternativeName>
        <fullName evidence="1">Recombinase A</fullName>
    </alternativeName>
</protein>
<keyword id="KW-0067">ATP-binding</keyword>
<keyword id="KW-0963">Cytoplasm</keyword>
<keyword id="KW-0227">DNA damage</keyword>
<keyword id="KW-0233">DNA recombination</keyword>
<keyword id="KW-0234">DNA repair</keyword>
<keyword id="KW-0238">DNA-binding</keyword>
<keyword id="KW-0547">Nucleotide-binding</keyword>
<keyword id="KW-0742">SOS response</keyword>
<organism>
    <name type="scientific">Streptococcus pyogenes serotype M5 (strain Manfredo)</name>
    <dbReference type="NCBI Taxonomy" id="160491"/>
    <lineage>
        <taxon>Bacteria</taxon>
        <taxon>Bacillati</taxon>
        <taxon>Bacillota</taxon>
        <taxon>Bacilli</taxon>
        <taxon>Lactobacillales</taxon>
        <taxon>Streptococcaceae</taxon>
        <taxon>Streptococcus</taxon>
    </lineage>
</organism>
<sequence length="378" mass="40646">MAKKLKKNEEITKKFGDERRKALDDALKNIEKDFGKGAVMRLGERAEQKVQVMSSGSLALDIALGAGGYPKGRIIEIYGPESSGKTTVALHAVAQAQKEGGIAAFIDAEHALDPAYAAALGVNIDELLLSQPDSGEQGLEIAGKLIDSGAVDLVVVDSVAALVPRAEIDGDIGDSHVGLQARMMSQAMRKLSASINKTKTIAIFINQLREKVGVMFGNPETTPGGRALKFYASVRLDVRGTTQIKGTGDQKDSSIGKETKIKVVKNKVAPPFKVAEVEIMYGEGISRTGELVKIASDLDIIQKAGAWFSYNGEKIGQGSENAKRYLAEHPELFDEIDRKVRVKFGLLEESEEESAMAVASEETDDLALDLDNGIEIED</sequence>
<accession>A2RGU8</accession>
<evidence type="ECO:0000255" key="1">
    <source>
        <dbReference type="HAMAP-Rule" id="MF_00268"/>
    </source>
</evidence>